<protein>
    <recommendedName>
        <fullName evidence="1">Thymidylate synthase</fullName>
        <shortName evidence="1">TS</shortName>
        <shortName evidence="1">TSase</shortName>
        <ecNumber evidence="1">2.1.1.45</ecNumber>
    </recommendedName>
</protein>
<proteinExistence type="inferred from homology"/>
<keyword id="KW-0963">Cytoplasm</keyword>
<keyword id="KW-0489">Methyltransferase</keyword>
<keyword id="KW-0545">Nucleotide biosynthesis</keyword>
<keyword id="KW-1185">Reference proteome</keyword>
<keyword id="KW-0808">Transferase</keyword>
<organism>
    <name type="scientific">Sphingopyxis alaskensis (strain DSM 13593 / LMG 18877 / RB2256)</name>
    <name type="common">Sphingomonas alaskensis</name>
    <dbReference type="NCBI Taxonomy" id="317655"/>
    <lineage>
        <taxon>Bacteria</taxon>
        <taxon>Pseudomonadati</taxon>
        <taxon>Pseudomonadota</taxon>
        <taxon>Alphaproteobacteria</taxon>
        <taxon>Sphingomonadales</taxon>
        <taxon>Sphingomonadaceae</taxon>
        <taxon>Sphingopyxis</taxon>
    </lineage>
</organism>
<sequence>MADSIHYELQYLDLMRRIWVDGDERVDRTGVGTRSLFGETMRFSLKDDAIPLLTTKRVYWKTALRELLWFLTGDTNIRPLVAQGVKIWTDWPLEKYRKATGEAISATDFEARIVADADFAAKWGDLGPVYGHQWVNWPRYEPAGGGLFRRADHGYNQIAALIDSLKNNPGSRRHIFTGWNVADLDRMALPPCHMTYQFHVRSDGGLSCLLFQRSCDLGLGFAFNIFEAALLTRMVAEQCGLYAHEVVWTGGDVHLYLNHAELVEQQLARVPEGKPRLRILRRPPSIFEYRFEDFVVEDYAPQAHISAPVAV</sequence>
<dbReference type="EC" id="2.1.1.45" evidence="1"/>
<dbReference type="EMBL" id="CP000356">
    <property type="protein sequence ID" value="ABF53046.1"/>
    <property type="status" value="ALT_INIT"/>
    <property type="molecule type" value="Genomic_DNA"/>
</dbReference>
<dbReference type="RefSeq" id="WP_011541628.1">
    <property type="nucleotide sequence ID" value="NC_008048.1"/>
</dbReference>
<dbReference type="SMR" id="Q1GTH6"/>
<dbReference type="STRING" id="317655.Sala_1332"/>
<dbReference type="KEGG" id="sal:Sala_1332"/>
<dbReference type="eggNOG" id="COG0207">
    <property type="taxonomic scope" value="Bacteria"/>
</dbReference>
<dbReference type="HOGENOM" id="CLU_021669_0_0_5"/>
<dbReference type="UniPathway" id="UPA00575"/>
<dbReference type="Proteomes" id="UP000006578">
    <property type="component" value="Chromosome"/>
</dbReference>
<dbReference type="GO" id="GO:0005829">
    <property type="term" value="C:cytosol"/>
    <property type="evidence" value="ECO:0007669"/>
    <property type="project" value="TreeGrafter"/>
</dbReference>
<dbReference type="GO" id="GO:0004799">
    <property type="term" value="F:thymidylate synthase activity"/>
    <property type="evidence" value="ECO:0007669"/>
    <property type="project" value="UniProtKB-UniRule"/>
</dbReference>
<dbReference type="GO" id="GO:0006231">
    <property type="term" value="P:dTMP biosynthetic process"/>
    <property type="evidence" value="ECO:0007669"/>
    <property type="project" value="UniProtKB-UniRule"/>
</dbReference>
<dbReference type="GO" id="GO:0006235">
    <property type="term" value="P:dTTP biosynthetic process"/>
    <property type="evidence" value="ECO:0007669"/>
    <property type="project" value="UniProtKB-UniRule"/>
</dbReference>
<dbReference type="GO" id="GO:0032259">
    <property type="term" value="P:methylation"/>
    <property type="evidence" value="ECO:0007669"/>
    <property type="project" value="UniProtKB-KW"/>
</dbReference>
<dbReference type="CDD" id="cd00351">
    <property type="entry name" value="TS_Pyrimidine_HMase"/>
    <property type="match status" value="1"/>
</dbReference>
<dbReference type="Gene3D" id="3.30.572.10">
    <property type="entry name" value="Thymidylate synthase/dCMP hydroxymethylase domain"/>
    <property type="match status" value="1"/>
</dbReference>
<dbReference type="HAMAP" id="MF_00008">
    <property type="entry name" value="Thymidy_synth_bact"/>
    <property type="match status" value="1"/>
</dbReference>
<dbReference type="InterPro" id="IPR045097">
    <property type="entry name" value="Thymidate_synth/dCMP_Mease"/>
</dbReference>
<dbReference type="InterPro" id="IPR023451">
    <property type="entry name" value="Thymidate_synth/dCMP_Mease_dom"/>
</dbReference>
<dbReference type="InterPro" id="IPR036926">
    <property type="entry name" value="Thymidate_synth/dCMP_Mease_sf"/>
</dbReference>
<dbReference type="InterPro" id="IPR000398">
    <property type="entry name" value="Thymidylate_synthase"/>
</dbReference>
<dbReference type="InterPro" id="IPR020940">
    <property type="entry name" value="Thymidylate_synthase_AS"/>
</dbReference>
<dbReference type="NCBIfam" id="TIGR03284">
    <property type="entry name" value="thym_sym"/>
    <property type="match status" value="1"/>
</dbReference>
<dbReference type="PANTHER" id="PTHR11548">
    <property type="entry name" value="THYMIDYLATE SYNTHASE 1"/>
    <property type="match status" value="1"/>
</dbReference>
<dbReference type="PANTHER" id="PTHR11548:SF1">
    <property type="entry name" value="THYMIDYLATE SYNTHASE 1"/>
    <property type="match status" value="1"/>
</dbReference>
<dbReference type="Pfam" id="PF00303">
    <property type="entry name" value="Thymidylat_synt"/>
    <property type="match status" value="1"/>
</dbReference>
<dbReference type="PRINTS" id="PR00108">
    <property type="entry name" value="THYMDSNTHASE"/>
</dbReference>
<dbReference type="SUPFAM" id="SSF55831">
    <property type="entry name" value="Thymidylate synthase/dCMP hydroxymethylase"/>
    <property type="match status" value="1"/>
</dbReference>
<dbReference type="PROSITE" id="PS00091">
    <property type="entry name" value="THYMIDYLATE_SYNTHASE"/>
    <property type="match status" value="1"/>
</dbReference>
<gene>
    <name evidence="1" type="primary">thyA</name>
    <name type="ordered locus">Sala_1332</name>
</gene>
<name>TYSY_SPHAL</name>
<evidence type="ECO:0000255" key="1">
    <source>
        <dbReference type="HAMAP-Rule" id="MF_00008"/>
    </source>
</evidence>
<evidence type="ECO:0000305" key="2"/>
<comment type="function">
    <text evidence="1">Catalyzes the reductive methylation of 2'-deoxyuridine-5'-monophosphate (dUMP) to 2'-deoxythymidine-5'-monophosphate (dTMP) while utilizing 5,10-methylenetetrahydrofolate (mTHF) as the methyl donor and reductant in the reaction, yielding dihydrofolate (DHF) as a by-product. This enzymatic reaction provides an intracellular de novo source of dTMP, an essential precursor for DNA biosynthesis.</text>
</comment>
<comment type="catalytic activity">
    <reaction evidence="1">
        <text>dUMP + (6R)-5,10-methylene-5,6,7,8-tetrahydrofolate = 7,8-dihydrofolate + dTMP</text>
        <dbReference type="Rhea" id="RHEA:12104"/>
        <dbReference type="ChEBI" id="CHEBI:15636"/>
        <dbReference type="ChEBI" id="CHEBI:57451"/>
        <dbReference type="ChEBI" id="CHEBI:63528"/>
        <dbReference type="ChEBI" id="CHEBI:246422"/>
        <dbReference type="EC" id="2.1.1.45"/>
    </reaction>
</comment>
<comment type="pathway">
    <text evidence="1">Pyrimidine metabolism; dTTP biosynthesis.</text>
</comment>
<comment type="subunit">
    <text evidence="1">Homodimer.</text>
</comment>
<comment type="subcellular location">
    <subcellularLocation>
        <location evidence="1">Cytoplasm</location>
    </subcellularLocation>
</comment>
<comment type="similarity">
    <text evidence="1">Belongs to the thymidylate synthase family. Bacterial-type ThyA subfamily.</text>
</comment>
<comment type="sequence caution" evidence="2">
    <conflict type="erroneous initiation">
        <sequence resource="EMBL-CDS" id="ABF53046"/>
    </conflict>
</comment>
<reference key="1">
    <citation type="journal article" date="2009" name="Proc. Natl. Acad. Sci. U.S.A.">
        <title>The genomic basis of trophic strategy in marine bacteria.</title>
        <authorList>
            <person name="Lauro F.M."/>
            <person name="McDougald D."/>
            <person name="Thomas T."/>
            <person name="Williams T.J."/>
            <person name="Egan S."/>
            <person name="Rice S."/>
            <person name="DeMaere M.Z."/>
            <person name="Ting L."/>
            <person name="Ertan H."/>
            <person name="Johnson J."/>
            <person name="Ferriera S."/>
            <person name="Lapidus A."/>
            <person name="Anderson I."/>
            <person name="Kyrpides N."/>
            <person name="Munk A.C."/>
            <person name="Detter C."/>
            <person name="Han C.S."/>
            <person name="Brown M.V."/>
            <person name="Robb F.T."/>
            <person name="Kjelleberg S."/>
            <person name="Cavicchioli R."/>
        </authorList>
    </citation>
    <scope>NUCLEOTIDE SEQUENCE [LARGE SCALE GENOMIC DNA]</scope>
    <source>
        <strain>DSM 13593 / LMG 18877 / RB2256</strain>
    </source>
</reference>
<feature type="chain" id="PRO_0000321484" description="Thymidylate synthase">
    <location>
        <begin position="1"/>
        <end position="311"/>
    </location>
</feature>
<feature type="active site" description="Nucleophile" evidence="1">
    <location>
        <position position="192"/>
    </location>
</feature>
<feature type="binding site" description="in other chain" evidence="1">
    <location>
        <position position="28"/>
    </location>
    <ligand>
        <name>dUMP</name>
        <dbReference type="ChEBI" id="CHEBI:246422"/>
        <note>ligand shared between dimeric partners</note>
    </ligand>
</feature>
<feature type="binding site" evidence="1">
    <location>
        <begin position="172"/>
        <end position="173"/>
    </location>
    <ligand>
        <name>dUMP</name>
        <dbReference type="ChEBI" id="CHEBI:246422"/>
        <note>ligand shared between dimeric partners</note>
    </ligand>
</feature>
<feature type="binding site" description="in other chain" evidence="1">
    <location>
        <begin position="213"/>
        <end position="216"/>
    </location>
    <ligand>
        <name>dUMP</name>
        <dbReference type="ChEBI" id="CHEBI:246422"/>
        <note>ligand shared between dimeric partners</note>
    </ligand>
</feature>
<feature type="binding site" evidence="1">
    <location>
        <position position="216"/>
    </location>
    <ligand>
        <name>(6R)-5,10-methylene-5,6,7,8-tetrahydrofolate</name>
        <dbReference type="ChEBI" id="CHEBI:15636"/>
    </ligand>
</feature>
<feature type="binding site" description="in other chain" evidence="1">
    <location>
        <position position="224"/>
    </location>
    <ligand>
        <name>dUMP</name>
        <dbReference type="ChEBI" id="CHEBI:246422"/>
        <note>ligand shared between dimeric partners</note>
    </ligand>
</feature>
<feature type="binding site" description="in other chain" evidence="1">
    <location>
        <begin position="254"/>
        <end position="256"/>
    </location>
    <ligand>
        <name>dUMP</name>
        <dbReference type="ChEBI" id="CHEBI:246422"/>
        <note>ligand shared between dimeric partners</note>
    </ligand>
</feature>
<feature type="binding site" evidence="1">
    <location>
        <position position="310"/>
    </location>
    <ligand>
        <name>(6R)-5,10-methylene-5,6,7,8-tetrahydrofolate</name>
        <dbReference type="ChEBI" id="CHEBI:15636"/>
    </ligand>
</feature>
<accession>Q1GTH6</accession>